<protein>
    <recommendedName>
        <fullName>PRKR-interacting protein 1 homolog</fullName>
    </recommendedName>
</protein>
<comment type="function">
    <text evidence="2 3">Required for pre-mRNA splicing as component of the spliceosome (By similarity). Binds double-stranded RNA (By similarity).</text>
</comment>
<comment type="subunit">
    <text evidence="3">Component of the pre-catalytic and post-catalytic spliceosome complexes.</text>
</comment>
<comment type="subcellular location">
    <subcellularLocation>
        <location evidence="3">Nucleus</location>
    </subcellularLocation>
    <subcellularLocation>
        <location evidence="2">Nucleus</location>
        <location evidence="2">Nucleolus</location>
    </subcellularLocation>
</comment>
<comment type="similarity">
    <text evidence="6">Belongs to the PRKRIP1 family.</text>
</comment>
<gene>
    <name type="primary">PRKRIP1</name>
    <name type="ORF">RCJMB04_9c11</name>
</gene>
<reference key="1">
    <citation type="journal article" date="2005" name="Genome Biol.">
        <title>Full-length cDNAs from chicken bursal lymphocytes to facilitate gene function analysis.</title>
        <authorList>
            <person name="Caldwell R.B."/>
            <person name="Kierzek A.M."/>
            <person name="Arakawa H."/>
            <person name="Bezzubov Y."/>
            <person name="Zaim J."/>
            <person name="Fiedler P."/>
            <person name="Kutter S."/>
            <person name="Blagodatski A."/>
            <person name="Kostovska D."/>
            <person name="Koter M."/>
            <person name="Plachy J."/>
            <person name="Carninci P."/>
            <person name="Hayashizaki Y."/>
            <person name="Buerstedde J.-M."/>
        </authorList>
    </citation>
    <scope>NUCLEOTIDE SEQUENCE [LARGE SCALE MRNA]</scope>
    <source>
        <strain>CB</strain>
        <tissue>Bursa of Fabricius</tissue>
    </source>
</reference>
<feature type="chain" id="PRO_0000324790" description="PRKR-interacting protein 1 homolog">
    <location>
        <begin position="1"/>
        <end position="189"/>
    </location>
</feature>
<feature type="region of interest" description="Disordered" evidence="5">
    <location>
        <begin position="1"/>
        <end position="56"/>
    </location>
</feature>
<feature type="region of interest" description="Required for RNA-binding" evidence="1">
    <location>
        <begin position="49"/>
        <end position="141"/>
    </location>
</feature>
<feature type="region of interest" description="Disordered" evidence="5">
    <location>
        <begin position="113"/>
        <end position="189"/>
    </location>
</feature>
<feature type="region of interest" description="Required for nuclear localization" evidence="1">
    <location>
        <begin position="124"/>
        <end position="136"/>
    </location>
</feature>
<feature type="coiled-coil region" evidence="4">
    <location>
        <begin position="89"/>
        <end position="181"/>
    </location>
</feature>
<feature type="compositionally biased region" description="Basic and acidic residues" evidence="5">
    <location>
        <begin position="25"/>
        <end position="41"/>
    </location>
</feature>
<feature type="compositionally biased region" description="Basic and acidic residues" evidence="5">
    <location>
        <begin position="113"/>
        <end position="123"/>
    </location>
</feature>
<feature type="compositionally biased region" description="Basic residues" evidence="5">
    <location>
        <begin position="124"/>
        <end position="141"/>
    </location>
</feature>
<feature type="compositionally biased region" description="Basic and acidic residues" evidence="5">
    <location>
        <begin position="142"/>
        <end position="162"/>
    </location>
</feature>
<feature type="compositionally biased region" description="Acidic residues" evidence="5">
    <location>
        <begin position="163"/>
        <end position="181"/>
    </location>
</feature>
<keyword id="KW-0175">Coiled coil</keyword>
<keyword id="KW-0507">mRNA processing</keyword>
<keyword id="KW-0508">mRNA splicing</keyword>
<keyword id="KW-0539">Nucleus</keyword>
<keyword id="KW-1185">Reference proteome</keyword>
<keyword id="KW-0747">Spliceosome</keyword>
<dbReference type="EMBL" id="AJ719994">
    <property type="protein sequence ID" value="CAG31653.1"/>
    <property type="molecule type" value="mRNA"/>
</dbReference>
<dbReference type="RefSeq" id="NP_001006214.1">
    <property type="nucleotide sequence ID" value="NM_001006214.3"/>
</dbReference>
<dbReference type="SMR" id="Q5ZKU0"/>
<dbReference type="FunCoup" id="Q5ZKU0">
    <property type="interactions" value="1290"/>
</dbReference>
<dbReference type="STRING" id="9031.ENSGALP00000002831"/>
<dbReference type="PaxDb" id="9031-ENSGALP00000002831"/>
<dbReference type="Ensembl" id="ENSGALT00010070855.1">
    <property type="protein sequence ID" value="ENSGALP00010043546.1"/>
    <property type="gene ID" value="ENSGALG00010029299.1"/>
</dbReference>
<dbReference type="GeneID" id="417508"/>
<dbReference type="KEGG" id="gga:417508"/>
<dbReference type="CTD" id="79706"/>
<dbReference type="VEuPathDB" id="HostDB:geneid_417508"/>
<dbReference type="eggNOG" id="KOG4055">
    <property type="taxonomic scope" value="Eukaryota"/>
</dbReference>
<dbReference type="GeneTree" id="ENSGT00390000005003"/>
<dbReference type="HOGENOM" id="CLU_079129_2_0_1"/>
<dbReference type="InParanoid" id="Q5ZKU0"/>
<dbReference type="OMA" id="MRINKLM"/>
<dbReference type="OrthoDB" id="10067079at2759"/>
<dbReference type="PhylomeDB" id="Q5ZKU0"/>
<dbReference type="TreeFam" id="TF314382"/>
<dbReference type="PRO" id="PR:Q5ZKU0"/>
<dbReference type="Proteomes" id="UP000000539">
    <property type="component" value="Chromosome 19"/>
</dbReference>
<dbReference type="Bgee" id="ENSGALG00000001833">
    <property type="expression patterns" value="Expressed in ovary and 14 other cell types or tissues"/>
</dbReference>
<dbReference type="GO" id="GO:0005730">
    <property type="term" value="C:nucleolus"/>
    <property type="evidence" value="ECO:0000318"/>
    <property type="project" value="GO_Central"/>
</dbReference>
<dbReference type="GO" id="GO:0005681">
    <property type="term" value="C:spliceosomal complex"/>
    <property type="evidence" value="ECO:0007669"/>
    <property type="project" value="UniProtKB-KW"/>
</dbReference>
<dbReference type="GO" id="GO:0003725">
    <property type="term" value="F:double-stranded RNA binding"/>
    <property type="evidence" value="ECO:0000318"/>
    <property type="project" value="GO_Central"/>
</dbReference>
<dbReference type="GO" id="GO:0019901">
    <property type="term" value="F:protein kinase binding"/>
    <property type="evidence" value="ECO:0000318"/>
    <property type="project" value="GO_Central"/>
</dbReference>
<dbReference type="GO" id="GO:0004860">
    <property type="term" value="F:protein kinase inhibitor activity"/>
    <property type="evidence" value="ECO:0000318"/>
    <property type="project" value="GO_Central"/>
</dbReference>
<dbReference type="GO" id="GO:0006397">
    <property type="term" value="P:mRNA processing"/>
    <property type="evidence" value="ECO:0007669"/>
    <property type="project" value="UniProtKB-KW"/>
</dbReference>
<dbReference type="GO" id="GO:0003014">
    <property type="term" value="P:renal system process"/>
    <property type="evidence" value="ECO:0007669"/>
    <property type="project" value="Ensembl"/>
</dbReference>
<dbReference type="GO" id="GO:0008380">
    <property type="term" value="P:RNA splicing"/>
    <property type="evidence" value="ECO:0007669"/>
    <property type="project" value="UniProtKB-KW"/>
</dbReference>
<dbReference type="InterPro" id="IPR009548">
    <property type="entry name" value="Prkrip1"/>
</dbReference>
<dbReference type="PANTHER" id="PTHR13507">
    <property type="entry name" value="PRKR-INTERACTING PROTEIN 1"/>
    <property type="match status" value="1"/>
</dbReference>
<dbReference type="PANTHER" id="PTHR13507:SF0">
    <property type="entry name" value="PRKR-INTERACTING PROTEIN 1"/>
    <property type="match status" value="1"/>
</dbReference>
<dbReference type="Pfam" id="PF06658">
    <property type="entry name" value="DUF1168"/>
    <property type="match status" value="1"/>
</dbReference>
<name>PKRI1_CHICK</name>
<proteinExistence type="evidence at transcript level"/>
<evidence type="ECO:0000250" key="1"/>
<evidence type="ECO:0000250" key="2">
    <source>
        <dbReference type="UniProtKB" id="Q9CWV6"/>
    </source>
</evidence>
<evidence type="ECO:0000250" key="3">
    <source>
        <dbReference type="UniProtKB" id="Q9H875"/>
    </source>
</evidence>
<evidence type="ECO:0000255" key="4"/>
<evidence type="ECO:0000256" key="5">
    <source>
        <dbReference type="SAM" id="MobiDB-lite"/>
    </source>
</evidence>
<evidence type="ECO:0000305" key="6"/>
<organism>
    <name type="scientific">Gallus gallus</name>
    <name type="common">Chicken</name>
    <dbReference type="NCBI Taxonomy" id="9031"/>
    <lineage>
        <taxon>Eukaryota</taxon>
        <taxon>Metazoa</taxon>
        <taxon>Chordata</taxon>
        <taxon>Craniata</taxon>
        <taxon>Vertebrata</taxon>
        <taxon>Euteleostomi</taxon>
        <taxon>Archelosauria</taxon>
        <taxon>Archosauria</taxon>
        <taxon>Dinosauria</taxon>
        <taxon>Saurischia</taxon>
        <taxon>Theropoda</taxon>
        <taxon>Coelurosauria</taxon>
        <taxon>Aves</taxon>
        <taxon>Neognathae</taxon>
        <taxon>Galloanserae</taxon>
        <taxon>Galliformes</taxon>
        <taxon>Phasianidae</taxon>
        <taxon>Phasianinae</taxon>
        <taxon>Gallus</taxon>
    </lineage>
</organism>
<accession>Q5ZKU0</accession>
<sequence>MAAPSAPRPPRPRKEPQPLVIPRNAAEEQRLRLERLMRNPEKTVPIPEKLNEWAPRPPPEFVRDVMGSSAGAGSGEFHVYRHLRRREYQRQDFMDAMAEKQRLDEEFQKKLERNKMIAEEQTAKRRRKRQKLKEKKLQAKKNKLEQKKQEKESDQSQERVSSEDDEEDSKEEEEKEDDAEEPSFVMGRG</sequence>